<comment type="function">
    <text evidence="1">Catalyzes the transfer of a ribosyl phosphate group from 5-phosphoribose 1-diphosphate to orotate, leading to the formation of orotidine monophosphate (OMP).</text>
</comment>
<comment type="catalytic activity">
    <reaction evidence="1">
        <text>orotidine 5'-phosphate + diphosphate = orotate + 5-phospho-alpha-D-ribose 1-diphosphate</text>
        <dbReference type="Rhea" id="RHEA:10380"/>
        <dbReference type="ChEBI" id="CHEBI:30839"/>
        <dbReference type="ChEBI" id="CHEBI:33019"/>
        <dbReference type="ChEBI" id="CHEBI:57538"/>
        <dbReference type="ChEBI" id="CHEBI:58017"/>
        <dbReference type="EC" id="2.4.2.10"/>
    </reaction>
</comment>
<comment type="cofactor">
    <cofactor evidence="1">
        <name>Mg(2+)</name>
        <dbReference type="ChEBI" id="CHEBI:18420"/>
    </cofactor>
</comment>
<comment type="pathway">
    <text evidence="1">Pyrimidine metabolism; UMP biosynthesis via de novo pathway; UMP from orotate: step 1/2.</text>
</comment>
<comment type="subunit">
    <text evidence="1">Homodimer.</text>
</comment>
<comment type="similarity">
    <text evidence="1">Belongs to the purine/pyrimidine phosphoribosyltransferase family. PyrE subfamily.</text>
</comment>
<protein>
    <recommendedName>
        <fullName evidence="1">Orotate phosphoribosyltransferase</fullName>
        <shortName evidence="1">OPRT</shortName>
        <shortName evidence="1">OPRTase</shortName>
        <ecNumber evidence="1">2.4.2.10</ecNumber>
    </recommendedName>
</protein>
<dbReference type="EC" id="2.4.2.10" evidence="1"/>
<dbReference type="EMBL" id="CP001132">
    <property type="protein sequence ID" value="ACH83271.1"/>
    <property type="molecule type" value="Genomic_DNA"/>
</dbReference>
<dbReference type="RefSeq" id="WP_012536428.1">
    <property type="nucleotide sequence ID" value="NC_011206.1"/>
</dbReference>
<dbReference type="SMR" id="B5EQ26"/>
<dbReference type="GeneID" id="65280231"/>
<dbReference type="KEGG" id="afe:Lferr_1029"/>
<dbReference type="eggNOG" id="COG0461">
    <property type="taxonomic scope" value="Bacteria"/>
</dbReference>
<dbReference type="HOGENOM" id="CLU_074878_3_0_6"/>
<dbReference type="UniPathway" id="UPA00070">
    <property type="reaction ID" value="UER00119"/>
</dbReference>
<dbReference type="GO" id="GO:0000287">
    <property type="term" value="F:magnesium ion binding"/>
    <property type="evidence" value="ECO:0007669"/>
    <property type="project" value="UniProtKB-UniRule"/>
</dbReference>
<dbReference type="GO" id="GO:0004588">
    <property type="term" value="F:orotate phosphoribosyltransferase activity"/>
    <property type="evidence" value="ECO:0007669"/>
    <property type="project" value="UniProtKB-UniRule"/>
</dbReference>
<dbReference type="GO" id="GO:0044205">
    <property type="term" value="P:'de novo' UMP biosynthetic process"/>
    <property type="evidence" value="ECO:0007669"/>
    <property type="project" value="UniProtKB-UniRule"/>
</dbReference>
<dbReference type="GO" id="GO:0019856">
    <property type="term" value="P:pyrimidine nucleobase biosynthetic process"/>
    <property type="evidence" value="ECO:0007669"/>
    <property type="project" value="InterPro"/>
</dbReference>
<dbReference type="CDD" id="cd06223">
    <property type="entry name" value="PRTases_typeI"/>
    <property type="match status" value="1"/>
</dbReference>
<dbReference type="Gene3D" id="3.40.50.2020">
    <property type="match status" value="1"/>
</dbReference>
<dbReference type="HAMAP" id="MF_01208">
    <property type="entry name" value="PyrE"/>
    <property type="match status" value="1"/>
</dbReference>
<dbReference type="InterPro" id="IPR023031">
    <property type="entry name" value="OPRT"/>
</dbReference>
<dbReference type="InterPro" id="IPR006273">
    <property type="entry name" value="Orotate_PRibTrfase_bac"/>
</dbReference>
<dbReference type="InterPro" id="IPR000836">
    <property type="entry name" value="PRibTrfase_dom"/>
</dbReference>
<dbReference type="InterPro" id="IPR029057">
    <property type="entry name" value="PRTase-like"/>
</dbReference>
<dbReference type="NCBIfam" id="TIGR01367">
    <property type="entry name" value="pyrE_Therm"/>
    <property type="match status" value="1"/>
</dbReference>
<dbReference type="PANTHER" id="PTHR19278">
    <property type="entry name" value="OROTATE PHOSPHORIBOSYLTRANSFERASE"/>
    <property type="match status" value="1"/>
</dbReference>
<dbReference type="PANTHER" id="PTHR19278:SF9">
    <property type="entry name" value="URIDINE 5'-MONOPHOSPHATE SYNTHASE"/>
    <property type="match status" value="1"/>
</dbReference>
<dbReference type="SUPFAM" id="SSF53271">
    <property type="entry name" value="PRTase-like"/>
    <property type="match status" value="1"/>
</dbReference>
<sequence>MTADEVVALYKEDGALLHGHFLLSSGLHSDTYLQSARVLQYPGHAARLCAAMVAGIPDDLRRRISCVVGPAMGAVLVSYECGRALGVRSLFTEREAGQMVLRRGFVLAPGEGVLVVEDITTTGGSTRECMAAVTAAGGQVLAASAIIDRSSGFSDFDGAPFFPLLKLPVLTWEAAACPLCAAGGTPVKPGSRGLS</sequence>
<gene>
    <name evidence="1" type="primary">pyrE</name>
    <name type="ordered locus">Lferr_1029</name>
</gene>
<organism>
    <name type="scientific">Acidithiobacillus ferrooxidans (strain ATCC 53993 / BNL-5-31)</name>
    <name type="common">Leptospirillum ferrooxidans (ATCC 53993)</name>
    <dbReference type="NCBI Taxonomy" id="380394"/>
    <lineage>
        <taxon>Bacteria</taxon>
        <taxon>Pseudomonadati</taxon>
        <taxon>Pseudomonadota</taxon>
        <taxon>Acidithiobacillia</taxon>
        <taxon>Acidithiobacillales</taxon>
        <taxon>Acidithiobacillaceae</taxon>
        <taxon>Acidithiobacillus</taxon>
    </lineage>
</organism>
<evidence type="ECO:0000255" key="1">
    <source>
        <dbReference type="HAMAP-Rule" id="MF_01208"/>
    </source>
</evidence>
<feature type="chain" id="PRO_1000138756" description="Orotate phosphoribosyltransferase">
    <location>
        <begin position="1"/>
        <end position="195"/>
    </location>
</feature>
<feature type="binding site" evidence="1">
    <location>
        <begin position="117"/>
        <end position="125"/>
    </location>
    <ligand>
        <name>5-phospho-alpha-D-ribose 1-diphosphate</name>
        <dbReference type="ChEBI" id="CHEBI:58017"/>
    </ligand>
</feature>
<feature type="binding site" evidence="1">
    <location>
        <position position="121"/>
    </location>
    <ligand>
        <name>orotate</name>
        <dbReference type="ChEBI" id="CHEBI:30839"/>
    </ligand>
</feature>
<feature type="binding site" evidence="1">
    <location>
        <position position="149"/>
    </location>
    <ligand>
        <name>orotate</name>
        <dbReference type="ChEBI" id="CHEBI:30839"/>
    </ligand>
</feature>
<keyword id="KW-0328">Glycosyltransferase</keyword>
<keyword id="KW-0460">Magnesium</keyword>
<keyword id="KW-0665">Pyrimidine biosynthesis</keyword>
<keyword id="KW-0808">Transferase</keyword>
<name>PYRE_ACIF5</name>
<proteinExistence type="inferred from homology"/>
<reference key="1">
    <citation type="submission" date="2008-08" db="EMBL/GenBank/DDBJ databases">
        <title>Complete sequence of Acidithiobacillus ferrooxidans ATCC 53993.</title>
        <authorList>
            <person name="Lucas S."/>
            <person name="Copeland A."/>
            <person name="Lapidus A."/>
            <person name="Glavina del Rio T."/>
            <person name="Dalin E."/>
            <person name="Tice H."/>
            <person name="Bruce D."/>
            <person name="Goodwin L."/>
            <person name="Pitluck S."/>
            <person name="Sims D."/>
            <person name="Brettin T."/>
            <person name="Detter J.C."/>
            <person name="Han C."/>
            <person name="Kuske C.R."/>
            <person name="Larimer F."/>
            <person name="Land M."/>
            <person name="Hauser L."/>
            <person name="Kyrpides N."/>
            <person name="Lykidis A."/>
            <person name="Borole A.P."/>
        </authorList>
    </citation>
    <scope>NUCLEOTIDE SEQUENCE [LARGE SCALE GENOMIC DNA]</scope>
    <source>
        <strain>ATCC 53993 / BNL-5-31</strain>
    </source>
</reference>
<accession>B5EQ26</accession>